<feature type="chain" id="PRO_1000137447" description="Phosphatidylglycerol--prolipoprotein diacylglyceryl transferase">
    <location>
        <begin position="1"/>
        <end position="300"/>
    </location>
</feature>
<feature type="transmembrane region" description="Helical" evidence="1">
    <location>
        <begin position="17"/>
        <end position="37"/>
    </location>
</feature>
<feature type="transmembrane region" description="Helical" evidence="1">
    <location>
        <begin position="59"/>
        <end position="79"/>
    </location>
</feature>
<feature type="transmembrane region" description="Helical" evidence="1">
    <location>
        <begin position="94"/>
        <end position="114"/>
    </location>
</feature>
<feature type="transmembrane region" description="Helical" evidence="1">
    <location>
        <begin position="129"/>
        <end position="149"/>
    </location>
</feature>
<feature type="transmembrane region" description="Helical" evidence="1">
    <location>
        <begin position="204"/>
        <end position="224"/>
    </location>
</feature>
<feature type="transmembrane region" description="Helical" evidence="1">
    <location>
        <begin position="230"/>
        <end position="250"/>
    </location>
</feature>
<feature type="transmembrane region" description="Helical" evidence="1">
    <location>
        <begin position="265"/>
        <end position="285"/>
    </location>
</feature>
<feature type="binding site" evidence="1">
    <location>
        <position position="142"/>
    </location>
    <ligand>
        <name>a 1,2-diacyl-sn-glycero-3-phospho-(1'-sn-glycerol)</name>
        <dbReference type="ChEBI" id="CHEBI:64716"/>
    </ligand>
</feature>
<accession>B2UAK3</accession>
<name>LGT_RALPJ</name>
<keyword id="KW-0997">Cell inner membrane</keyword>
<keyword id="KW-1003">Cell membrane</keyword>
<keyword id="KW-0472">Membrane</keyword>
<keyword id="KW-0808">Transferase</keyword>
<keyword id="KW-0812">Transmembrane</keyword>
<keyword id="KW-1133">Transmembrane helix</keyword>
<sequence length="300" mass="33972">MLIHPQFDPVALHLGPLAIRWYGLMYLAAFIMFLWFGRLRTRQPHIAAEGWTGRDLDDMLFYGVLGVILGGRLGYVLFYKPDWYFAHPLDIFKVWEGGMAFHGGFLGVVVAMMLYARMRGRSWMQVTDFIAPMVPCGLAAGRLGNFINGELWGRVSSPNLPWSMMFPQAQGEDREWLLSHAQEAVTSGLQAVFDQYHMLPRHPSQIYQFLGEGVLFFILLWLYARKPRPMGAVSGAFLLGYGVFRFAAEFAREPDNFLGLLAANLSMGQWLSLPMILIGIAMLVWSYRRAGNGEKNQAHA</sequence>
<evidence type="ECO:0000255" key="1">
    <source>
        <dbReference type="HAMAP-Rule" id="MF_01147"/>
    </source>
</evidence>
<proteinExistence type="inferred from homology"/>
<protein>
    <recommendedName>
        <fullName evidence="1">Phosphatidylglycerol--prolipoprotein diacylglyceryl transferase</fullName>
        <ecNumber evidence="1">2.5.1.145</ecNumber>
    </recommendedName>
</protein>
<reference key="1">
    <citation type="submission" date="2008-05" db="EMBL/GenBank/DDBJ databases">
        <title>Complete sequence of chromosome 1 of Ralstonia pickettii 12J.</title>
        <authorList>
            <person name="Lucas S."/>
            <person name="Copeland A."/>
            <person name="Lapidus A."/>
            <person name="Glavina del Rio T."/>
            <person name="Dalin E."/>
            <person name="Tice H."/>
            <person name="Bruce D."/>
            <person name="Goodwin L."/>
            <person name="Pitluck S."/>
            <person name="Meincke L."/>
            <person name="Brettin T."/>
            <person name="Detter J.C."/>
            <person name="Han C."/>
            <person name="Kuske C.R."/>
            <person name="Schmutz J."/>
            <person name="Larimer F."/>
            <person name="Land M."/>
            <person name="Hauser L."/>
            <person name="Kyrpides N."/>
            <person name="Mikhailova N."/>
            <person name="Marsh T."/>
            <person name="Richardson P."/>
        </authorList>
    </citation>
    <scope>NUCLEOTIDE SEQUENCE [LARGE SCALE GENOMIC DNA]</scope>
    <source>
        <strain>12J</strain>
    </source>
</reference>
<gene>
    <name evidence="1" type="primary">lgt</name>
    <name type="ordered locus">Rpic_2674</name>
</gene>
<organism>
    <name type="scientific">Ralstonia pickettii (strain 12J)</name>
    <dbReference type="NCBI Taxonomy" id="402626"/>
    <lineage>
        <taxon>Bacteria</taxon>
        <taxon>Pseudomonadati</taxon>
        <taxon>Pseudomonadota</taxon>
        <taxon>Betaproteobacteria</taxon>
        <taxon>Burkholderiales</taxon>
        <taxon>Burkholderiaceae</taxon>
        <taxon>Ralstonia</taxon>
    </lineage>
</organism>
<dbReference type="EC" id="2.5.1.145" evidence="1"/>
<dbReference type="EMBL" id="CP001068">
    <property type="protein sequence ID" value="ACD27800.1"/>
    <property type="molecule type" value="Genomic_DNA"/>
</dbReference>
<dbReference type="SMR" id="B2UAK3"/>
<dbReference type="STRING" id="402626.Rpic_2674"/>
<dbReference type="KEGG" id="rpi:Rpic_2674"/>
<dbReference type="eggNOG" id="COG0682">
    <property type="taxonomic scope" value="Bacteria"/>
</dbReference>
<dbReference type="HOGENOM" id="CLU_013386_1_0_4"/>
<dbReference type="UniPathway" id="UPA00664"/>
<dbReference type="GO" id="GO:0005886">
    <property type="term" value="C:plasma membrane"/>
    <property type="evidence" value="ECO:0007669"/>
    <property type="project" value="UniProtKB-SubCell"/>
</dbReference>
<dbReference type="GO" id="GO:0008961">
    <property type="term" value="F:phosphatidylglycerol-prolipoprotein diacylglyceryl transferase activity"/>
    <property type="evidence" value="ECO:0007669"/>
    <property type="project" value="UniProtKB-UniRule"/>
</dbReference>
<dbReference type="GO" id="GO:0042158">
    <property type="term" value="P:lipoprotein biosynthetic process"/>
    <property type="evidence" value="ECO:0007669"/>
    <property type="project" value="UniProtKB-UniRule"/>
</dbReference>
<dbReference type="HAMAP" id="MF_01147">
    <property type="entry name" value="Lgt"/>
    <property type="match status" value="1"/>
</dbReference>
<dbReference type="InterPro" id="IPR001640">
    <property type="entry name" value="Lgt"/>
</dbReference>
<dbReference type="NCBIfam" id="TIGR00544">
    <property type="entry name" value="lgt"/>
    <property type="match status" value="1"/>
</dbReference>
<dbReference type="PANTHER" id="PTHR30589:SF0">
    <property type="entry name" value="PHOSPHATIDYLGLYCEROL--PROLIPOPROTEIN DIACYLGLYCERYL TRANSFERASE"/>
    <property type="match status" value="1"/>
</dbReference>
<dbReference type="PANTHER" id="PTHR30589">
    <property type="entry name" value="PROLIPOPROTEIN DIACYLGLYCERYL TRANSFERASE"/>
    <property type="match status" value="1"/>
</dbReference>
<dbReference type="Pfam" id="PF01790">
    <property type="entry name" value="LGT"/>
    <property type="match status" value="1"/>
</dbReference>
<dbReference type="PROSITE" id="PS01311">
    <property type="entry name" value="LGT"/>
    <property type="match status" value="1"/>
</dbReference>
<comment type="function">
    <text evidence="1">Catalyzes the transfer of the diacylglyceryl group from phosphatidylglycerol to the sulfhydryl group of the N-terminal cysteine of a prolipoprotein, the first step in the formation of mature lipoproteins.</text>
</comment>
<comment type="catalytic activity">
    <reaction evidence="1">
        <text>L-cysteinyl-[prolipoprotein] + a 1,2-diacyl-sn-glycero-3-phospho-(1'-sn-glycerol) = an S-1,2-diacyl-sn-glyceryl-L-cysteinyl-[prolipoprotein] + sn-glycerol 1-phosphate + H(+)</text>
        <dbReference type="Rhea" id="RHEA:56712"/>
        <dbReference type="Rhea" id="RHEA-COMP:14679"/>
        <dbReference type="Rhea" id="RHEA-COMP:14680"/>
        <dbReference type="ChEBI" id="CHEBI:15378"/>
        <dbReference type="ChEBI" id="CHEBI:29950"/>
        <dbReference type="ChEBI" id="CHEBI:57685"/>
        <dbReference type="ChEBI" id="CHEBI:64716"/>
        <dbReference type="ChEBI" id="CHEBI:140658"/>
        <dbReference type="EC" id="2.5.1.145"/>
    </reaction>
</comment>
<comment type="pathway">
    <text evidence="1">Protein modification; lipoprotein biosynthesis (diacylglyceryl transfer).</text>
</comment>
<comment type="subcellular location">
    <subcellularLocation>
        <location evidence="1">Cell inner membrane</location>
        <topology evidence="1">Multi-pass membrane protein</topology>
    </subcellularLocation>
</comment>
<comment type="similarity">
    <text evidence="1">Belongs to the Lgt family.</text>
</comment>